<organism>
    <name type="scientific">Staphylococcus aureus (strain MSSA476)</name>
    <dbReference type="NCBI Taxonomy" id="282459"/>
    <lineage>
        <taxon>Bacteria</taxon>
        <taxon>Bacillati</taxon>
        <taxon>Bacillota</taxon>
        <taxon>Bacilli</taxon>
        <taxon>Bacillales</taxon>
        <taxon>Staphylococcaceae</taxon>
        <taxon>Staphylococcus</taxon>
    </lineage>
</organism>
<comment type="subunit">
    <text evidence="1">Part of the 50S ribosomal subunit.</text>
</comment>
<comment type="similarity">
    <text evidence="1">Belongs to the universal ribosomal protein uL30 family.</text>
</comment>
<name>RL30_STAAS</name>
<gene>
    <name evidence="1" type="primary">rpmD</name>
    <name type="ordered locus">SAS2123</name>
</gene>
<feature type="chain" id="PRO_0000104609" description="Large ribosomal subunit protein uL30">
    <location>
        <begin position="1"/>
        <end position="59"/>
    </location>
</feature>
<reference key="1">
    <citation type="journal article" date="2004" name="Proc. Natl. Acad. Sci. U.S.A.">
        <title>Complete genomes of two clinical Staphylococcus aureus strains: evidence for the rapid evolution of virulence and drug resistance.</title>
        <authorList>
            <person name="Holden M.T.G."/>
            <person name="Feil E.J."/>
            <person name="Lindsay J.A."/>
            <person name="Peacock S.J."/>
            <person name="Day N.P.J."/>
            <person name="Enright M.C."/>
            <person name="Foster T.J."/>
            <person name="Moore C.E."/>
            <person name="Hurst L."/>
            <person name="Atkin R."/>
            <person name="Barron A."/>
            <person name="Bason N."/>
            <person name="Bentley S.D."/>
            <person name="Chillingworth C."/>
            <person name="Chillingworth T."/>
            <person name="Churcher C."/>
            <person name="Clark L."/>
            <person name="Corton C."/>
            <person name="Cronin A."/>
            <person name="Doggett J."/>
            <person name="Dowd L."/>
            <person name="Feltwell T."/>
            <person name="Hance Z."/>
            <person name="Harris B."/>
            <person name="Hauser H."/>
            <person name="Holroyd S."/>
            <person name="Jagels K."/>
            <person name="James K.D."/>
            <person name="Lennard N."/>
            <person name="Line A."/>
            <person name="Mayes R."/>
            <person name="Moule S."/>
            <person name="Mungall K."/>
            <person name="Ormond D."/>
            <person name="Quail M.A."/>
            <person name="Rabbinowitsch E."/>
            <person name="Rutherford K.M."/>
            <person name="Sanders M."/>
            <person name="Sharp S."/>
            <person name="Simmonds M."/>
            <person name="Stevens K."/>
            <person name="Whitehead S."/>
            <person name="Barrell B.G."/>
            <person name="Spratt B.G."/>
            <person name="Parkhill J."/>
        </authorList>
    </citation>
    <scope>NUCLEOTIDE SEQUENCE [LARGE SCALE GENOMIC DNA]</scope>
    <source>
        <strain>MSSA476</strain>
    </source>
</reference>
<accession>Q6G789</accession>
<dbReference type="EMBL" id="BX571857">
    <property type="protein sequence ID" value="CAG43934.1"/>
    <property type="molecule type" value="Genomic_DNA"/>
</dbReference>
<dbReference type="RefSeq" id="WP_001096577.1">
    <property type="nucleotide sequence ID" value="NC_002953.3"/>
</dbReference>
<dbReference type="SMR" id="Q6G789"/>
<dbReference type="KEGG" id="sas:SAS2123"/>
<dbReference type="HOGENOM" id="CLU_131047_2_1_9"/>
<dbReference type="GO" id="GO:0022625">
    <property type="term" value="C:cytosolic large ribosomal subunit"/>
    <property type="evidence" value="ECO:0007669"/>
    <property type="project" value="TreeGrafter"/>
</dbReference>
<dbReference type="GO" id="GO:0003735">
    <property type="term" value="F:structural constituent of ribosome"/>
    <property type="evidence" value="ECO:0007669"/>
    <property type="project" value="InterPro"/>
</dbReference>
<dbReference type="GO" id="GO:0006412">
    <property type="term" value="P:translation"/>
    <property type="evidence" value="ECO:0007669"/>
    <property type="project" value="UniProtKB-UniRule"/>
</dbReference>
<dbReference type="CDD" id="cd01658">
    <property type="entry name" value="Ribosomal_L30"/>
    <property type="match status" value="1"/>
</dbReference>
<dbReference type="FunFam" id="3.30.1390.20:FF:000001">
    <property type="entry name" value="50S ribosomal protein L30"/>
    <property type="match status" value="1"/>
</dbReference>
<dbReference type="Gene3D" id="3.30.1390.20">
    <property type="entry name" value="Ribosomal protein L30, ferredoxin-like fold domain"/>
    <property type="match status" value="1"/>
</dbReference>
<dbReference type="HAMAP" id="MF_01371_B">
    <property type="entry name" value="Ribosomal_uL30_B"/>
    <property type="match status" value="1"/>
</dbReference>
<dbReference type="InterPro" id="IPR036919">
    <property type="entry name" value="Ribo_uL30_ferredoxin-like_sf"/>
</dbReference>
<dbReference type="InterPro" id="IPR005996">
    <property type="entry name" value="Ribosomal_uL30_bac-type"/>
</dbReference>
<dbReference type="InterPro" id="IPR016082">
    <property type="entry name" value="Ribosomal_uL30_ferredoxin-like"/>
</dbReference>
<dbReference type="NCBIfam" id="TIGR01308">
    <property type="entry name" value="rpmD_bact"/>
    <property type="match status" value="1"/>
</dbReference>
<dbReference type="PANTHER" id="PTHR15892:SF2">
    <property type="entry name" value="LARGE RIBOSOMAL SUBUNIT PROTEIN UL30M"/>
    <property type="match status" value="1"/>
</dbReference>
<dbReference type="PANTHER" id="PTHR15892">
    <property type="entry name" value="MITOCHONDRIAL RIBOSOMAL PROTEIN L30"/>
    <property type="match status" value="1"/>
</dbReference>
<dbReference type="Pfam" id="PF00327">
    <property type="entry name" value="Ribosomal_L30"/>
    <property type="match status" value="1"/>
</dbReference>
<dbReference type="PIRSF" id="PIRSF002211">
    <property type="entry name" value="Ribosomal_L30_bac-type"/>
    <property type="match status" value="1"/>
</dbReference>
<dbReference type="SUPFAM" id="SSF55129">
    <property type="entry name" value="Ribosomal protein L30p/L7e"/>
    <property type="match status" value="1"/>
</dbReference>
<evidence type="ECO:0000255" key="1">
    <source>
        <dbReference type="HAMAP-Rule" id="MF_01371"/>
    </source>
</evidence>
<evidence type="ECO:0000305" key="2"/>
<keyword id="KW-0687">Ribonucleoprotein</keyword>
<keyword id="KW-0689">Ribosomal protein</keyword>
<protein>
    <recommendedName>
        <fullName evidence="1">Large ribosomal subunit protein uL30</fullName>
    </recommendedName>
    <alternativeName>
        <fullName evidence="2">50S ribosomal protein L30</fullName>
    </alternativeName>
</protein>
<proteinExistence type="inferred from homology"/>
<sequence length="59" mass="6554">MAKLQITLTRSVIGRPETQRKTVEALGLKKTNSSVVVEDNPAIRGQINKVKHLVTVEEK</sequence>